<proteinExistence type="inferred from homology"/>
<accession>Q47JQ1</accession>
<name>RLMH_DECAR</name>
<protein>
    <recommendedName>
        <fullName evidence="1">Ribosomal RNA large subunit methyltransferase H</fullName>
        <ecNumber evidence="1">2.1.1.177</ecNumber>
    </recommendedName>
    <alternativeName>
        <fullName evidence="1">23S rRNA (pseudouridine1915-N3)-methyltransferase</fullName>
    </alternativeName>
    <alternativeName>
        <fullName evidence="1">23S rRNA m3Psi1915 methyltransferase</fullName>
    </alternativeName>
    <alternativeName>
        <fullName evidence="1">rRNA (pseudouridine-N3-)-methyltransferase RlmH</fullName>
    </alternativeName>
</protein>
<reference key="1">
    <citation type="journal article" date="2009" name="BMC Genomics">
        <title>Metabolic analysis of the soil microbe Dechloromonas aromatica str. RCB: indications of a surprisingly complex life-style and cryptic anaerobic pathways for aromatic degradation.</title>
        <authorList>
            <person name="Salinero K.K."/>
            <person name="Keller K."/>
            <person name="Feil W.S."/>
            <person name="Feil H."/>
            <person name="Trong S."/>
            <person name="Di Bartolo G."/>
            <person name="Lapidus A."/>
        </authorList>
    </citation>
    <scope>NUCLEOTIDE SEQUENCE [LARGE SCALE GENOMIC DNA]</scope>
    <source>
        <strain>RCB</strain>
    </source>
</reference>
<sequence>MKLAVLAVGHRQPDWVNEGCAEYLKRMPRELAASVTEIKPEARGSKTREQLLAAEKSRIRDAMAAGSRLVVLDEKGDDLTTLKLAKRLETWMQDGRDVALLIGGADGLDEEFKQQADDRLRLSSLTLPHGMARLLLCEQLYRAVSVLKNHPYHREG</sequence>
<feature type="chain" id="PRO_0000260550" description="Ribosomal RNA large subunit methyltransferase H">
    <location>
        <begin position="1"/>
        <end position="156"/>
    </location>
</feature>
<feature type="binding site" evidence="1">
    <location>
        <position position="72"/>
    </location>
    <ligand>
        <name>S-adenosyl-L-methionine</name>
        <dbReference type="ChEBI" id="CHEBI:59789"/>
    </ligand>
</feature>
<feature type="binding site" evidence="1">
    <location>
        <position position="103"/>
    </location>
    <ligand>
        <name>S-adenosyl-L-methionine</name>
        <dbReference type="ChEBI" id="CHEBI:59789"/>
    </ligand>
</feature>
<feature type="binding site" evidence="1">
    <location>
        <begin position="122"/>
        <end position="127"/>
    </location>
    <ligand>
        <name>S-adenosyl-L-methionine</name>
        <dbReference type="ChEBI" id="CHEBI:59789"/>
    </ligand>
</feature>
<dbReference type="EC" id="2.1.1.177" evidence="1"/>
<dbReference type="EMBL" id="CP000089">
    <property type="protein sequence ID" value="AAZ44930.1"/>
    <property type="molecule type" value="Genomic_DNA"/>
</dbReference>
<dbReference type="SMR" id="Q47JQ1"/>
<dbReference type="STRING" id="159087.Daro_0171"/>
<dbReference type="KEGG" id="dar:Daro_0171"/>
<dbReference type="eggNOG" id="COG1576">
    <property type="taxonomic scope" value="Bacteria"/>
</dbReference>
<dbReference type="HOGENOM" id="CLU_100552_1_0_4"/>
<dbReference type="OrthoDB" id="9806643at2"/>
<dbReference type="GO" id="GO:0005737">
    <property type="term" value="C:cytoplasm"/>
    <property type="evidence" value="ECO:0007669"/>
    <property type="project" value="UniProtKB-SubCell"/>
</dbReference>
<dbReference type="GO" id="GO:0070038">
    <property type="term" value="F:rRNA (pseudouridine-N3-)-methyltransferase activity"/>
    <property type="evidence" value="ECO:0007669"/>
    <property type="project" value="UniProtKB-UniRule"/>
</dbReference>
<dbReference type="CDD" id="cd18081">
    <property type="entry name" value="RlmH-like"/>
    <property type="match status" value="1"/>
</dbReference>
<dbReference type="Gene3D" id="3.40.1280.10">
    <property type="match status" value="1"/>
</dbReference>
<dbReference type="HAMAP" id="MF_00658">
    <property type="entry name" value="23SrRNA_methyltr_H"/>
    <property type="match status" value="1"/>
</dbReference>
<dbReference type="InterPro" id="IPR029028">
    <property type="entry name" value="Alpha/beta_knot_MTases"/>
</dbReference>
<dbReference type="InterPro" id="IPR003742">
    <property type="entry name" value="RlmH-like"/>
</dbReference>
<dbReference type="InterPro" id="IPR029026">
    <property type="entry name" value="tRNA_m1G_MTases_N"/>
</dbReference>
<dbReference type="NCBIfam" id="NF000986">
    <property type="entry name" value="PRK00103.1-4"/>
    <property type="match status" value="1"/>
</dbReference>
<dbReference type="PANTHER" id="PTHR33603">
    <property type="entry name" value="METHYLTRANSFERASE"/>
    <property type="match status" value="1"/>
</dbReference>
<dbReference type="PANTHER" id="PTHR33603:SF1">
    <property type="entry name" value="RIBOSOMAL RNA LARGE SUBUNIT METHYLTRANSFERASE H"/>
    <property type="match status" value="1"/>
</dbReference>
<dbReference type="Pfam" id="PF02590">
    <property type="entry name" value="SPOUT_MTase"/>
    <property type="match status" value="1"/>
</dbReference>
<dbReference type="PIRSF" id="PIRSF004505">
    <property type="entry name" value="MT_bac"/>
    <property type="match status" value="1"/>
</dbReference>
<dbReference type="SUPFAM" id="SSF75217">
    <property type="entry name" value="alpha/beta knot"/>
    <property type="match status" value="1"/>
</dbReference>
<organism>
    <name type="scientific">Dechloromonas aromatica (strain RCB)</name>
    <dbReference type="NCBI Taxonomy" id="159087"/>
    <lineage>
        <taxon>Bacteria</taxon>
        <taxon>Pseudomonadati</taxon>
        <taxon>Pseudomonadota</taxon>
        <taxon>Betaproteobacteria</taxon>
        <taxon>Rhodocyclales</taxon>
        <taxon>Azonexaceae</taxon>
        <taxon>Dechloromonas</taxon>
    </lineage>
</organism>
<comment type="function">
    <text evidence="1">Specifically methylates the pseudouridine at position 1915 (m3Psi1915) in 23S rRNA.</text>
</comment>
<comment type="catalytic activity">
    <reaction evidence="1">
        <text>pseudouridine(1915) in 23S rRNA + S-adenosyl-L-methionine = N(3)-methylpseudouridine(1915) in 23S rRNA + S-adenosyl-L-homocysteine + H(+)</text>
        <dbReference type="Rhea" id="RHEA:42752"/>
        <dbReference type="Rhea" id="RHEA-COMP:10221"/>
        <dbReference type="Rhea" id="RHEA-COMP:10222"/>
        <dbReference type="ChEBI" id="CHEBI:15378"/>
        <dbReference type="ChEBI" id="CHEBI:57856"/>
        <dbReference type="ChEBI" id="CHEBI:59789"/>
        <dbReference type="ChEBI" id="CHEBI:65314"/>
        <dbReference type="ChEBI" id="CHEBI:74486"/>
        <dbReference type="EC" id="2.1.1.177"/>
    </reaction>
</comment>
<comment type="subunit">
    <text evidence="1">Homodimer.</text>
</comment>
<comment type="subcellular location">
    <subcellularLocation>
        <location evidence="1">Cytoplasm</location>
    </subcellularLocation>
</comment>
<comment type="similarity">
    <text evidence="1">Belongs to the RNA methyltransferase RlmH family.</text>
</comment>
<keyword id="KW-0963">Cytoplasm</keyword>
<keyword id="KW-0489">Methyltransferase</keyword>
<keyword id="KW-0698">rRNA processing</keyword>
<keyword id="KW-0949">S-adenosyl-L-methionine</keyword>
<keyword id="KW-0808">Transferase</keyword>
<evidence type="ECO:0000255" key="1">
    <source>
        <dbReference type="HAMAP-Rule" id="MF_00658"/>
    </source>
</evidence>
<gene>
    <name evidence="1" type="primary">rlmH</name>
    <name type="ordered locus">Daro_0171</name>
</gene>